<proteinExistence type="inferred from homology"/>
<sequence length="334" mass="37318">MTKTTILLLCGGGSSEHEISLVSANYIQQQLELTPEFHVIRVEMKKEGWFSEQGALVYLDTNSATLNSDKASYPIDFVVPCIHGFPGETGDIQSMLELAGIPYLGCGPEASANSFNKITSKLWYDALDIPNTPYLFLTQNTPSSIDKAKQAFGHWGSIFVKAARQGSSVGCYKVTTEDQIAPAIEAAFGFSEQVLVEQAVKPRELEVSAYEMNGKLYISKPGEVIAPEGTFYSYEEKYSANSHARTVLEAENLTEKHKELIQTYAERVFIHMKLRHLSRIDFFLTQEGQIYLNEVNTFPGMTPISMFPKMLEHNGHRFSEFLVQCVTNTLVNAK</sequence>
<reference key="1">
    <citation type="journal article" date="2008" name="PLoS ONE">
        <title>A recalibrated molecular clock and independent origins for the cholera pandemic clones.</title>
        <authorList>
            <person name="Feng L."/>
            <person name="Reeves P.R."/>
            <person name="Lan R."/>
            <person name="Ren Y."/>
            <person name="Gao C."/>
            <person name="Zhou Z."/>
            <person name="Ren Y."/>
            <person name="Cheng J."/>
            <person name="Wang W."/>
            <person name="Wang J."/>
            <person name="Qian W."/>
            <person name="Li D."/>
            <person name="Wang L."/>
        </authorList>
    </citation>
    <scope>NUCLEOTIDE SEQUENCE [LARGE SCALE GENOMIC DNA]</scope>
    <source>
        <strain>M66-2</strain>
    </source>
</reference>
<dbReference type="EC" id="6.3.2.4" evidence="2"/>
<dbReference type="EMBL" id="CP001234">
    <property type="protein sequence ID" value="ACP07493.1"/>
    <property type="molecule type" value="Genomic_DNA"/>
</dbReference>
<dbReference type="RefSeq" id="WP_000169444.1">
    <property type="nucleotide sequence ID" value="NC_012580.1"/>
</dbReference>
<dbReference type="SMR" id="C3LVI8"/>
<dbReference type="KEGG" id="vcm:VCM66_A0531"/>
<dbReference type="HOGENOM" id="CLU_039268_0_0_6"/>
<dbReference type="UniPathway" id="UPA00219"/>
<dbReference type="Proteomes" id="UP000001217">
    <property type="component" value="Chromosome II"/>
</dbReference>
<dbReference type="GO" id="GO:0005829">
    <property type="term" value="C:cytosol"/>
    <property type="evidence" value="ECO:0007669"/>
    <property type="project" value="TreeGrafter"/>
</dbReference>
<dbReference type="GO" id="GO:0005524">
    <property type="term" value="F:ATP binding"/>
    <property type="evidence" value="ECO:0007669"/>
    <property type="project" value="UniProtKB-KW"/>
</dbReference>
<dbReference type="GO" id="GO:0008716">
    <property type="term" value="F:D-alanine-D-alanine ligase activity"/>
    <property type="evidence" value="ECO:0007669"/>
    <property type="project" value="UniProtKB-UniRule"/>
</dbReference>
<dbReference type="GO" id="GO:0046872">
    <property type="term" value="F:metal ion binding"/>
    <property type="evidence" value="ECO:0007669"/>
    <property type="project" value="UniProtKB-KW"/>
</dbReference>
<dbReference type="GO" id="GO:0071555">
    <property type="term" value="P:cell wall organization"/>
    <property type="evidence" value="ECO:0007669"/>
    <property type="project" value="UniProtKB-KW"/>
</dbReference>
<dbReference type="GO" id="GO:0009252">
    <property type="term" value="P:peptidoglycan biosynthetic process"/>
    <property type="evidence" value="ECO:0007669"/>
    <property type="project" value="UniProtKB-UniRule"/>
</dbReference>
<dbReference type="GO" id="GO:0008360">
    <property type="term" value="P:regulation of cell shape"/>
    <property type="evidence" value="ECO:0007669"/>
    <property type="project" value="UniProtKB-KW"/>
</dbReference>
<dbReference type="FunFam" id="3.30.1490.20:FF:000034">
    <property type="entry name" value="D-alanine--D-alanine ligase"/>
    <property type="match status" value="1"/>
</dbReference>
<dbReference type="FunFam" id="3.30.470.20:FF:000088">
    <property type="entry name" value="D-alanine--D-alanine ligase"/>
    <property type="match status" value="1"/>
</dbReference>
<dbReference type="FunFam" id="3.40.50.20:FF:000034">
    <property type="entry name" value="D-alanine--D-alanine ligase"/>
    <property type="match status" value="1"/>
</dbReference>
<dbReference type="Gene3D" id="3.40.50.20">
    <property type="match status" value="1"/>
</dbReference>
<dbReference type="Gene3D" id="3.30.1490.20">
    <property type="entry name" value="ATP-grasp fold, A domain"/>
    <property type="match status" value="1"/>
</dbReference>
<dbReference type="Gene3D" id="3.30.470.20">
    <property type="entry name" value="ATP-grasp fold, B domain"/>
    <property type="match status" value="1"/>
</dbReference>
<dbReference type="HAMAP" id="MF_00047">
    <property type="entry name" value="Dala_Dala_lig"/>
    <property type="match status" value="1"/>
</dbReference>
<dbReference type="InterPro" id="IPR011761">
    <property type="entry name" value="ATP-grasp"/>
</dbReference>
<dbReference type="InterPro" id="IPR013815">
    <property type="entry name" value="ATP_grasp_subdomain_1"/>
</dbReference>
<dbReference type="InterPro" id="IPR000291">
    <property type="entry name" value="D-Ala_lig_Van_CS"/>
</dbReference>
<dbReference type="InterPro" id="IPR005905">
    <property type="entry name" value="D_ala_D_ala"/>
</dbReference>
<dbReference type="InterPro" id="IPR011095">
    <property type="entry name" value="Dala_Dala_lig_C"/>
</dbReference>
<dbReference type="InterPro" id="IPR011127">
    <property type="entry name" value="Dala_Dala_lig_N"/>
</dbReference>
<dbReference type="InterPro" id="IPR016185">
    <property type="entry name" value="PreATP-grasp_dom_sf"/>
</dbReference>
<dbReference type="NCBIfam" id="TIGR01205">
    <property type="entry name" value="D_ala_D_alaTIGR"/>
    <property type="match status" value="1"/>
</dbReference>
<dbReference type="NCBIfam" id="NF002527">
    <property type="entry name" value="PRK01966.1-3"/>
    <property type="match status" value="1"/>
</dbReference>
<dbReference type="NCBIfam" id="NF002528">
    <property type="entry name" value="PRK01966.1-4"/>
    <property type="match status" value="1"/>
</dbReference>
<dbReference type="PANTHER" id="PTHR23132">
    <property type="entry name" value="D-ALANINE--D-ALANINE LIGASE"/>
    <property type="match status" value="1"/>
</dbReference>
<dbReference type="PANTHER" id="PTHR23132:SF25">
    <property type="entry name" value="D-ALANINE--D-ALANINE LIGASE A"/>
    <property type="match status" value="1"/>
</dbReference>
<dbReference type="Pfam" id="PF07478">
    <property type="entry name" value="Dala_Dala_lig_C"/>
    <property type="match status" value="1"/>
</dbReference>
<dbReference type="Pfam" id="PF01820">
    <property type="entry name" value="Dala_Dala_lig_N"/>
    <property type="match status" value="1"/>
</dbReference>
<dbReference type="PIRSF" id="PIRSF039102">
    <property type="entry name" value="Ddl/VanB"/>
    <property type="match status" value="1"/>
</dbReference>
<dbReference type="SUPFAM" id="SSF56059">
    <property type="entry name" value="Glutathione synthetase ATP-binding domain-like"/>
    <property type="match status" value="1"/>
</dbReference>
<dbReference type="SUPFAM" id="SSF52440">
    <property type="entry name" value="PreATP-grasp domain"/>
    <property type="match status" value="1"/>
</dbReference>
<dbReference type="PROSITE" id="PS50975">
    <property type="entry name" value="ATP_GRASP"/>
    <property type="match status" value="1"/>
</dbReference>
<dbReference type="PROSITE" id="PS00843">
    <property type="entry name" value="DALA_DALA_LIGASE_1"/>
    <property type="match status" value="1"/>
</dbReference>
<dbReference type="PROSITE" id="PS00844">
    <property type="entry name" value="DALA_DALA_LIGASE_2"/>
    <property type="match status" value="1"/>
</dbReference>
<evidence type="ECO:0000250" key="1"/>
<evidence type="ECO:0000255" key="2">
    <source>
        <dbReference type="HAMAP-Rule" id="MF_00047"/>
    </source>
</evidence>
<accession>C3LVI8</accession>
<keyword id="KW-0067">ATP-binding</keyword>
<keyword id="KW-0133">Cell shape</keyword>
<keyword id="KW-0961">Cell wall biogenesis/degradation</keyword>
<keyword id="KW-0963">Cytoplasm</keyword>
<keyword id="KW-0436">Ligase</keyword>
<keyword id="KW-0460">Magnesium</keyword>
<keyword id="KW-0464">Manganese</keyword>
<keyword id="KW-0479">Metal-binding</keyword>
<keyword id="KW-0547">Nucleotide-binding</keyword>
<keyword id="KW-0573">Peptidoglycan synthesis</keyword>
<organism>
    <name type="scientific">Vibrio cholerae serotype O1 (strain M66-2)</name>
    <dbReference type="NCBI Taxonomy" id="579112"/>
    <lineage>
        <taxon>Bacteria</taxon>
        <taxon>Pseudomonadati</taxon>
        <taxon>Pseudomonadota</taxon>
        <taxon>Gammaproteobacteria</taxon>
        <taxon>Vibrionales</taxon>
        <taxon>Vibrionaceae</taxon>
        <taxon>Vibrio</taxon>
    </lineage>
</organism>
<gene>
    <name evidence="2" type="primary">ddl</name>
    <name type="ordered locus">VCM66_A0531</name>
</gene>
<protein>
    <recommendedName>
        <fullName evidence="2">D-alanine--D-alanine ligase</fullName>
        <ecNumber evidence="2">6.3.2.4</ecNumber>
    </recommendedName>
    <alternativeName>
        <fullName evidence="2">D-Ala-D-Ala ligase</fullName>
    </alternativeName>
    <alternativeName>
        <fullName evidence="2">D-alanylalanine synthetase</fullName>
    </alternativeName>
</protein>
<feature type="chain" id="PRO_1000189753" description="D-alanine--D-alanine ligase">
    <location>
        <begin position="1"/>
        <end position="334"/>
    </location>
</feature>
<feature type="domain" description="ATP-grasp" evidence="2">
    <location>
        <begin position="121"/>
        <end position="327"/>
    </location>
</feature>
<feature type="binding site" evidence="2">
    <location>
        <begin position="151"/>
        <end position="206"/>
    </location>
    <ligand>
        <name>ATP</name>
        <dbReference type="ChEBI" id="CHEBI:30616"/>
    </ligand>
</feature>
<feature type="binding site" evidence="2">
    <location>
        <position position="281"/>
    </location>
    <ligand>
        <name>Mg(2+)</name>
        <dbReference type="ChEBI" id="CHEBI:18420"/>
        <label>1</label>
    </ligand>
</feature>
<feature type="binding site" evidence="2">
    <location>
        <position position="294"/>
    </location>
    <ligand>
        <name>Mg(2+)</name>
        <dbReference type="ChEBI" id="CHEBI:18420"/>
        <label>1</label>
    </ligand>
</feature>
<feature type="binding site" evidence="2">
    <location>
        <position position="294"/>
    </location>
    <ligand>
        <name>Mg(2+)</name>
        <dbReference type="ChEBI" id="CHEBI:18420"/>
        <label>2</label>
    </ligand>
</feature>
<feature type="binding site" evidence="2">
    <location>
        <position position="296"/>
    </location>
    <ligand>
        <name>Mg(2+)</name>
        <dbReference type="ChEBI" id="CHEBI:18420"/>
        <label>2</label>
    </ligand>
</feature>
<comment type="function">
    <text evidence="2">Cell wall formation.</text>
</comment>
<comment type="catalytic activity">
    <reaction evidence="2">
        <text>2 D-alanine + ATP = D-alanyl-D-alanine + ADP + phosphate + H(+)</text>
        <dbReference type="Rhea" id="RHEA:11224"/>
        <dbReference type="ChEBI" id="CHEBI:15378"/>
        <dbReference type="ChEBI" id="CHEBI:30616"/>
        <dbReference type="ChEBI" id="CHEBI:43474"/>
        <dbReference type="ChEBI" id="CHEBI:57416"/>
        <dbReference type="ChEBI" id="CHEBI:57822"/>
        <dbReference type="ChEBI" id="CHEBI:456216"/>
        <dbReference type="EC" id="6.3.2.4"/>
    </reaction>
</comment>
<comment type="cofactor">
    <cofactor evidence="1">
        <name>Mg(2+)</name>
        <dbReference type="ChEBI" id="CHEBI:18420"/>
    </cofactor>
    <cofactor evidence="1">
        <name>Mn(2+)</name>
        <dbReference type="ChEBI" id="CHEBI:29035"/>
    </cofactor>
    <text evidence="1">Binds 2 magnesium or manganese ions per subunit.</text>
</comment>
<comment type="pathway">
    <text evidence="2">Cell wall biogenesis; peptidoglycan biosynthesis.</text>
</comment>
<comment type="subcellular location">
    <subcellularLocation>
        <location evidence="2">Cytoplasm</location>
    </subcellularLocation>
</comment>
<comment type="similarity">
    <text evidence="2">Belongs to the D-alanine--D-alanine ligase family.</text>
</comment>
<name>DDL_VIBCM</name>